<proteinExistence type="evidence at transcript level"/>
<organism>
    <name type="scientific">Conus marmoreus</name>
    <name type="common">Marble cone</name>
    <dbReference type="NCBI Taxonomy" id="42752"/>
    <lineage>
        <taxon>Eukaryota</taxon>
        <taxon>Metazoa</taxon>
        <taxon>Spiralia</taxon>
        <taxon>Lophotrochozoa</taxon>
        <taxon>Mollusca</taxon>
        <taxon>Gastropoda</taxon>
        <taxon>Caenogastropoda</taxon>
        <taxon>Neogastropoda</taxon>
        <taxon>Conoidea</taxon>
        <taxon>Conidae</taxon>
        <taxon>Conus</taxon>
    </lineage>
</organism>
<sequence>MSRLGVLLTICLLLFPLTAVPLDGDQPADRPAERLQDDISSEHHPHFDSGRECCGSFACRFGCVPCCV</sequence>
<keyword id="KW-1015">Disulfide bond</keyword>
<keyword id="KW-0379">Hydroxylation</keyword>
<keyword id="KW-0964">Secreted</keyword>
<keyword id="KW-0732">Signal</keyword>
<keyword id="KW-0800">Toxin</keyword>
<evidence type="ECO:0000250" key="1"/>
<evidence type="ECO:0000250" key="2">
    <source>
        <dbReference type="UniProtKB" id="P0CI24"/>
    </source>
</evidence>
<evidence type="ECO:0000255" key="3"/>
<evidence type="ECO:0000256" key="4">
    <source>
        <dbReference type="SAM" id="MobiDB-lite"/>
    </source>
</evidence>
<evidence type="ECO:0000305" key="5"/>
<comment type="subcellular location">
    <subcellularLocation>
        <location evidence="1">Secreted</location>
    </subcellularLocation>
</comment>
<comment type="tissue specificity">
    <text>Expressed by the venom duct.</text>
</comment>
<comment type="domain">
    <text>The cysteine framework is III (CC-C-C-CC). Classified in the M-2 branch, since 2 residues stand between the fourth and the fifth cysteine residues.</text>
</comment>
<comment type="similarity">
    <text evidence="5">Belongs to the conotoxin M superfamily.</text>
</comment>
<reference key="1">
    <citation type="journal article" date="2005" name="Biochemistry">
        <title>Definition of the M-conotoxin superfamily: characterization of novel peptides from molluscivorous Conus venoms.</title>
        <authorList>
            <person name="Corpuz G.P."/>
            <person name="Jacobsen R.B."/>
            <person name="Jimenez E.C."/>
            <person name="Watkins M."/>
            <person name="Walker C."/>
            <person name="Colledge C."/>
            <person name="Garrett J.E."/>
            <person name="McDougal O."/>
            <person name="Li W."/>
            <person name="Gray W.R."/>
            <person name="Hillyard D.R."/>
            <person name="Rivier J."/>
            <person name="McIntosh J.M."/>
            <person name="Cruz L.J."/>
            <person name="Olivera B.M."/>
        </authorList>
    </citation>
    <scope>NUCLEOTIDE SEQUENCE [MRNA]</scope>
    <source>
        <tissue>Venom duct</tissue>
    </source>
</reference>
<dbReference type="ConoServer" id="1470">
    <property type="toxin name" value="Mr3.3 precursor"/>
</dbReference>
<dbReference type="GO" id="GO:0005576">
    <property type="term" value="C:extracellular region"/>
    <property type="evidence" value="ECO:0007669"/>
    <property type="project" value="UniProtKB-SubCell"/>
</dbReference>
<dbReference type="GO" id="GO:0008200">
    <property type="term" value="F:ion channel inhibitor activity"/>
    <property type="evidence" value="ECO:0007669"/>
    <property type="project" value="InterPro"/>
</dbReference>
<dbReference type="GO" id="GO:0090729">
    <property type="term" value="F:toxin activity"/>
    <property type="evidence" value="ECO:0007669"/>
    <property type="project" value="UniProtKB-KW"/>
</dbReference>
<dbReference type="InterPro" id="IPR004214">
    <property type="entry name" value="Conotoxin"/>
</dbReference>
<dbReference type="Pfam" id="PF02950">
    <property type="entry name" value="Conotoxin"/>
    <property type="match status" value="1"/>
</dbReference>
<name>M33_CONMR</name>
<feature type="signal peptide" evidence="3">
    <location>
        <begin position="1"/>
        <end position="19"/>
    </location>
</feature>
<feature type="propeptide" id="PRO_0000246041" evidence="1">
    <location>
        <begin position="20"/>
        <end position="51"/>
    </location>
</feature>
<feature type="peptide" id="PRO_0000246042" description="Conotoxin Mr3.3">
    <location>
        <begin position="52"/>
        <end position="68"/>
    </location>
</feature>
<feature type="region of interest" description="Disordered" evidence="4">
    <location>
        <begin position="22"/>
        <end position="46"/>
    </location>
</feature>
<feature type="compositionally biased region" description="Basic and acidic residues" evidence="4">
    <location>
        <begin position="27"/>
        <end position="46"/>
    </location>
</feature>
<feature type="modified residue" description="4-hydroxyproline" evidence="1">
    <location>
        <position position="65"/>
    </location>
</feature>
<feature type="disulfide bond" evidence="2">
    <location>
        <begin position="53"/>
        <end position="67"/>
    </location>
</feature>
<feature type="disulfide bond" evidence="2">
    <location>
        <begin position="54"/>
        <end position="63"/>
    </location>
</feature>
<feature type="disulfide bond" evidence="2">
    <location>
        <begin position="59"/>
        <end position="66"/>
    </location>
</feature>
<protein>
    <recommendedName>
        <fullName>Conotoxin Mr3.3</fullName>
    </recommendedName>
</protein>
<accession>P0C1N2</accession>